<name>CR3L2_RAT</name>
<organism>
    <name type="scientific">Rattus norvegicus</name>
    <name type="common">Rat</name>
    <dbReference type="NCBI Taxonomy" id="10116"/>
    <lineage>
        <taxon>Eukaryota</taxon>
        <taxon>Metazoa</taxon>
        <taxon>Chordata</taxon>
        <taxon>Craniata</taxon>
        <taxon>Vertebrata</taxon>
        <taxon>Euteleostomi</taxon>
        <taxon>Mammalia</taxon>
        <taxon>Eutheria</taxon>
        <taxon>Euarchontoglires</taxon>
        <taxon>Glires</taxon>
        <taxon>Rodentia</taxon>
        <taxon>Myomorpha</taxon>
        <taxon>Muroidea</taxon>
        <taxon>Muridae</taxon>
        <taxon>Murinae</taxon>
        <taxon>Rattus</taxon>
    </lineage>
</organism>
<accession>Q6QDP7</accession>
<comment type="function">
    <text evidence="3">Transcription factor involved in unfolded protein response (UPR). In the absence of endoplasmic reticulum (ER) stress, inserted into ER membranes, with N-terminal DNA-binding and transcription activation domains oriented toward the cytosolic face of the membrane. In response to ER stress, transported to the Golgi, where it is cleaved in a site-specific manner by resident proteases S1P/MBTPS1 and S2P/MBTPS2. The released N-terminal cytosolic domain is translocated to the nucleus to effect transcription of specific target genes. Plays a critical role in chondrogenesis by activating the transcription of SEC23A, which promotes the transport and secretion of cartilage matrix proteins, and possibly that of ER biogenesis-related genes. In a neuroblastoma cell line, protects cells from ER stress-induced death. In vitro activates transcription of target genes via direct binding to the CRE site.</text>
</comment>
<comment type="subunit">
    <text evidence="1">Binds DNA as a dimer.</text>
</comment>
<comment type="subcellular location">
    <subcellularLocation>
        <location evidence="3">Endoplasmic reticulum membrane</location>
        <topology evidence="3">Single-pass type II membrane protein</topology>
    </subcellularLocation>
    <text evidence="3">ER membrane resident protein. Upon ER stress, translocated to the Golgi apparatus where it is cleaved. The cytosolic N-terminal fragment (processed cyclic AMP-responsive element-binding protein 3-like protein 1) is transported into the nucleus.</text>
</comment>
<comment type="subcellular location">
    <molecule>Processed cyclic AMP-responsive element-binding protein 3-like protein 2</molecule>
    <subcellularLocation>
        <location evidence="3">Nucleus</location>
    </subcellularLocation>
    <text evidence="3">Upon ER stress, translocated into the nucleus.</text>
</comment>
<comment type="PTM">
    <text evidence="3">Upon ER stress, translocated to the Golgi apparatus, where it is processed by regulated intramembrane proteolysis (RIP) to release the cytosol-facing N-terminal transcription factor domain. The cleavage is performed sequentially by site-1 and site-2 proteases (S1P/MBTPS1 and S2P/MBTPS2).</text>
</comment>
<comment type="PTM">
    <text evidence="3">N-glycosylated.</text>
</comment>
<comment type="PTM">
    <text evidence="3">Ubiquitinated by HRD1/SYVN1; undergoes 'Lys-48'-linked ubiquitination, followed by rapid proteasomal degradation under normal conditions. Upon ER stress, SYVN1 E3 ubiquitin-protein ligase dissociates from its substrate, ubiquitination does not occur and CREB3L2 is stabilized.</text>
</comment>
<comment type="similarity">
    <text evidence="7">Belongs to the bZIP family. ATF subfamily.</text>
</comment>
<sequence>MEVLESGEQSVLQWDRKLSELSEPGETEALMYHTHFSELLDEFSQNVLGQLLNDPFLSEKSVSMEVEPSPTSPAPLIQAEHSYSLSEEPRAQSPFTHVAASDGFNDEEVESEKWYLSTEFPSATIKTEPITEEQPPGLVPSVTLTITAISTPFEKEESPLDMSAGGDSSCQTLIPKIKLEPHEVDQFLNFSPKEASVDQLHLPPTPPSSHSSDSEGSLSPNPRLHPFSLSQAHSPGRAMPRGPSALSTSPLLTAPHKLQGSGPLVLTEEEKRTLIAEGYPIPTKLPLTKSEEKALKKIRRKIKNKISAQESRRKKKEYMDSLEKKVESCSTENLELRKKVEVLENTNRTLLQQLQKLQTLVMGKVSRTCKLAGTQTGTCLMVVVLCFAVAFGSLFQGYGLYPSATKMALPSQHPLSEPYTASVVRSRNLLIYEEHSSLEESSSPASAGELGGWDRGSSLLRASSGLEALPEVDLPHFIISKETSLEKSVLLELQQHLVSSKLEGNETLKVVELERRVNATF</sequence>
<keyword id="KW-0010">Activator</keyword>
<keyword id="KW-0217">Developmental protein</keyword>
<keyword id="KW-0238">DNA-binding</keyword>
<keyword id="KW-0256">Endoplasmic reticulum</keyword>
<keyword id="KW-0325">Glycoprotein</keyword>
<keyword id="KW-1017">Isopeptide bond</keyword>
<keyword id="KW-0472">Membrane</keyword>
<keyword id="KW-0539">Nucleus</keyword>
<keyword id="KW-0597">Phosphoprotein</keyword>
<keyword id="KW-1185">Reference proteome</keyword>
<keyword id="KW-0735">Signal-anchor</keyword>
<keyword id="KW-0804">Transcription</keyword>
<keyword id="KW-0805">Transcription regulation</keyword>
<keyword id="KW-0812">Transmembrane</keyword>
<keyword id="KW-1133">Transmembrane helix</keyword>
<keyword id="KW-0832">Ubl conjugation</keyword>
<keyword id="KW-0834">Unfolded protein response</keyword>
<gene>
    <name type="primary">Creb3l2</name>
    <name type="synonym">Ra69</name>
</gene>
<proteinExistence type="evidence at transcript level"/>
<dbReference type="EMBL" id="AY546001">
    <property type="protein sequence ID" value="AAS49162.1"/>
    <property type="molecule type" value="mRNA"/>
</dbReference>
<dbReference type="RefSeq" id="NP_001012188.1">
    <property type="nucleotide sequence ID" value="NM_001012188.2"/>
</dbReference>
<dbReference type="SMR" id="Q6QDP7"/>
<dbReference type="BioGRID" id="263374">
    <property type="interactions" value="2"/>
</dbReference>
<dbReference type="FunCoup" id="Q6QDP7">
    <property type="interactions" value="584"/>
</dbReference>
<dbReference type="STRING" id="10116.ENSRNOP00000017338"/>
<dbReference type="GlyCosmos" id="Q6QDP7">
    <property type="glycosylation" value="2 sites, No reported glycans"/>
</dbReference>
<dbReference type="GlyGen" id="Q6QDP7">
    <property type="glycosylation" value="3 sites"/>
</dbReference>
<dbReference type="PhosphoSitePlus" id="Q6QDP7"/>
<dbReference type="PaxDb" id="10116-ENSRNOP00000017338"/>
<dbReference type="GeneID" id="362339"/>
<dbReference type="KEGG" id="rno:362339"/>
<dbReference type="UCSC" id="RGD:1306040">
    <property type="organism name" value="rat"/>
</dbReference>
<dbReference type="AGR" id="RGD:1306040"/>
<dbReference type="CTD" id="64764"/>
<dbReference type="RGD" id="1306040">
    <property type="gene designation" value="Creb3l2"/>
</dbReference>
<dbReference type="VEuPathDB" id="HostDB:ENSRNOG00000012826"/>
<dbReference type="eggNOG" id="KOG0709">
    <property type="taxonomic scope" value="Eukaryota"/>
</dbReference>
<dbReference type="HOGENOM" id="CLU_037638_0_0_1"/>
<dbReference type="InParanoid" id="Q6QDP7"/>
<dbReference type="OrthoDB" id="78852at9989"/>
<dbReference type="PhylomeDB" id="Q6QDP7"/>
<dbReference type="TreeFam" id="TF316079"/>
<dbReference type="PRO" id="PR:Q6QDP7"/>
<dbReference type="Proteomes" id="UP000002494">
    <property type="component" value="Chromosome 4"/>
</dbReference>
<dbReference type="Bgee" id="ENSRNOG00000012826">
    <property type="expression patterns" value="Expressed in lung and 18 other cell types or tissues"/>
</dbReference>
<dbReference type="GO" id="GO:0000785">
    <property type="term" value="C:chromatin"/>
    <property type="evidence" value="ECO:0000314"/>
    <property type="project" value="RGD"/>
</dbReference>
<dbReference type="GO" id="GO:0005783">
    <property type="term" value="C:endoplasmic reticulum"/>
    <property type="evidence" value="ECO:0000250"/>
    <property type="project" value="UniProtKB"/>
</dbReference>
<dbReference type="GO" id="GO:0005789">
    <property type="term" value="C:endoplasmic reticulum membrane"/>
    <property type="evidence" value="ECO:0007669"/>
    <property type="project" value="UniProtKB-SubCell"/>
</dbReference>
<dbReference type="GO" id="GO:0005634">
    <property type="term" value="C:nucleus"/>
    <property type="evidence" value="ECO:0000250"/>
    <property type="project" value="UniProtKB"/>
</dbReference>
<dbReference type="GO" id="GO:0097038">
    <property type="term" value="C:perinuclear endoplasmic reticulum"/>
    <property type="evidence" value="ECO:0000314"/>
    <property type="project" value="RGD"/>
</dbReference>
<dbReference type="GO" id="GO:0035497">
    <property type="term" value="F:cAMP response element binding"/>
    <property type="evidence" value="ECO:0000266"/>
    <property type="project" value="RGD"/>
</dbReference>
<dbReference type="GO" id="GO:0001228">
    <property type="term" value="F:DNA-binding transcription activator activity, RNA polymerase II-specific"/>
    <property type="evidence" value="ECO:0000314"/>
    <property type="project" value="RGD"/>
</dbReference>
<dbReference type="GO" id="GO:0000981">
    <property type="term" value="F:DNA-binding transcription factor activity, RNA polymerase II-specific"/>
    <property type="evidence" value="ECO:0000318"/>
    <property type="project" value="GO_Central"/>
</dbReference>
<dbReference type="GO" id="GO:0000978">
    <property type="term" value="F:RNA polymerase II cis-regulatory region sequence-specific DNA binding"/>
    <property type="evidence" value="ECO:0000266"/>
    <property type="project" value="RGD"/>
</dbReference>
<dbReference type="GO" id="GO:0000976">
    <property type="term" value="F:transcription cis-regulatory region binding"/>
    <property type="evidence" value="ECO:0000250"/>
    <property type="project" value="UniProtKB"/>
</dbReference>
<dbReference type="GO" id="GO:0051216">
    <property type="term" value="P:cartilage development"/>
    <property type="evidence" value="ECO:0000250"/>
    <property type="project" value="UniProtKB"/>
</dbReference>
<dbReference type="GO" id="GO:0002062">
    <property type="term" value="P:chondrocyte differentiation"/>
    <property type="evidence" value="ECO:0000250"/>
    <property type="project" value="UniProtKB"/>
</dbReference>
<dbReference type="GO" id="GO:0006888">
    <property type="term" value="P:endoplasmic reticulum to Golgi vesicle-mediated transport"/>
    <property type="evidence" value="ECO:0000266"/>
    <property type="project" value="RGD"/>
</dbReference>
<dbReference type="GO" id="GO:0045893">
    <property type="term" value="P:positive regulation of DNA-templated transcription"/>
    <property type="evidence" value="ECO:0000266"/>
    <property type="project" value="RGD"/>
</dbReference>
<dbReference type="GO" id="GO:0010628">
    <property type="term" value="P:positive regulation of gene expression"/>
    <property type="evidence" value="ECO:0000314"/>
    <property type="project" value="RGD"/>
</dbReference>
<dbReference type="GO" id="GO:0010976">
    <property type="term" value="P:positive regulation of neuron projection development"/>
    <property type="evidence" value="ECO:0000314"/>
    <property type="project" value="RGD"/>
</dbReference>
<dbReference type="GO" id="GO:0045944">
    <property type="term" value="P:positive regulation of transcription by RNA polymerase II"/>
    <property type="evidence" value="ECO:0000266"/>
    <property type="project" value="RGD"/>
</dbReference>
<dbReference type="GO" id="GO:0006357">
    <property type="term" value="P:regulation of transcription by RNA polymerase II"/>
    <property type="evidence" value="ECO:0000318"/>
    <property type="project" value="GO_Central"/>
</dbReference>
<dbReference type="GO" id="GO:0034976">
    <property type="term" value="P:response to endoplasmic reticulum stress"/>
    <property type="evidence" value="ECO:0000270"/>
    <property type="project" value="RGD"/>
</dbReference>
<dbReference type="GO" id="GO:0006986">
    <property type="term" value="P:response to unfolded protein"/>
    <property type="evidence" value="ECO:0007669"/>
    <property type="project" value="UniProtKB-KW"/>
</dbReference>
<dbReference type="CDD" id="cd14689">
    <property type="entry name" value="bZIP_CREB3"/>
    <property type="match status" value="1"/>
</dbReference>
<dbReference type="FunFam" id="1.20.5.170:FF:000054">
    <property type="entry name" value="Cyclic AMP-responsive element-binding protein 3-like 2"/>
    <property type="match status" value="1"/>
</dbReference>
<dbReference type="Gene3D" id="1.20.5.170">
    <property type="match status" value="1"/>
</dbReference>
<dbReference type="InterPro" id="IPR004827">
    <property type="entry name" value="bZIP"/>
</dbReference>
<dbReference type="InterPro" id="IPR046347">
    <property type="entry name" value="bZIP_sf"/>
</dbReference>
<dbReference type="PANTHER" id="PTHR46004">
    <property type="entry name" value="CYCLIC AMP RESPONSE ELEMENT-BINDING PROTEIN A"/>
    <property type="match status" value="1"/>
</dbReference>
<dbReference type="PANTHER" id="PTHR46004:SF2">
    <property type="entry name" value="CYCLIC AMP-RESPONSIVE ELEMENT-BINDING PROTEIN 3-LIKE PROTEIN 2"/>
    <property type="match status" value="1"/>
</dbReference>
<dbReference type="Pfam" id="PF00170">
    <property type="entry name" value="bZIP_1"/>
    <property type="match status" value="1"/>
</dbReference>
<dbReference type="SMART" id="SM00338">
    <property type="entry name" value="BRLZ"/>
    <property type="match status" value="1"/>
</dbReference>
<dbReference type="SUPFAM" id="SSF57959">
    <property type="entry name" value="Leucine zipper domain"/>
    <property type="match status" value="1"/>
</dbReference>
<dbReference type="PROSITE" id="PS50217">
    <property type="entry name" value="BZIP"/>
    <property type="match status" value="1"/>
</dbReference>
<dbReference type="PROSITE" id="PS00036">
    <property type="entry name" value="BZIP_BASIC"/>
    <property type="match status" value="1"/>
</dbReference>
<protein>
    <recommendedName>
        <fullName>Cyclic AMP-responsive element-binding protein 3-like protein 2</fullName>
        <shortName>cAMP-responsive element-binding protein 3-like protein 2</shortName>
    </recommendedName>
    <alternativeName>
        <fullName>SCI-related protein Ra69</fullName>
    </alternativeName>
    <component>
        <recommendedName>
            <fullName>Processed cyclic AMP-responsive element-binding protein 3-like protein 2</fullName>
        </recommendedName>
    </component>
</protein>
<feature type="chain" id="PRO_0000288070" description="Cyclic AMP-responsive element-binding protein 3-like protein 2">
    <location>
        <begin position="1"/>
        <end position="521"/>
    </location>
</feature>
<feature type="chain" id="PRO_0000296212" description="Processed cyclic AMP-responsive element-binding protein 3-like protein 2">
    <location>
        <begin position="1"/>
        <end status="unknown"/>
    </location>
</feature>
<feature type="topological domain" description="Cytoplasmic" evidence="4">
    <location>
        <begin position="1"/>
        <end position="378"/>
    </location>
</feature>
<feature type="transmembrane region" description="Helical; Signal-anchor for type II membrane protein" evidence="4">
    <location>
        <begin position="379"/>
        <end position="399"/>
    </location>
</feature>
<feature type="topological domain" description="Lumenal" evidence="4">
    <location>
        <begin position="400"/>
        <end position="521"/>
    </location>
</feature>
<feature type="domain" description="bZIP" evidence="5">
    <location>
        <begin position="294"/>
        <end position="357"/>
    </location>
</feature>
<feature type="region of interest" description="Disordered" evidence="6">
    <location>
        <begin position="196"/>
        <end position="264"/>
    </location>
</feature>
<feature type="region of interest" description="Basic motif" evidence="5">
    <location>
        <begin position="296"/>
        <end position="325"/>
    </location>
</feature>
<feature type="region of interest" description="Leucine-zipper" evidence="5">
    <location>
        <begin position="336"/>
        <end position="357"/>
    </location>
</feature>
<feature type="short sequence motif" description="S1P recognition" evidence="2">
    <location>
        <begin position="427"/>
        <end position="430"/>
    </location>
</feature>
<feature type="compositionally biased region" description="Low complexity" evidence="6">
    <location>
        <begin position="208"/>
        <end position="220"/>
    </location>
</feature>
<feature type="modified residue" description="Phosphoserine" evidence="2">
    <location>
        <position position="93"/>
    </location>
</feature>
<feature type="modified residue" description="Phosphoserine" evidence="2">
    <location>
        <position position="191"/>
    </location>
</feature>
<feature type="glycosylation site" description="N-linked (GlcNAc...) asparagine" evidence="4">
    <location>
        <position position="505"/>
    </location>
</feature>
<feature type="glycosylation site" description="N-linked (GlcNAc...) asparagine" evidence="4">
    <location>
        <position position="518"/>
    </location>
</feature>
<feature type="cross-link" description="Glycyl lysine isopeptide (Lys-Gly) (interchain with G-Cter in SUMO2)" evidence="2">
    <location>
        <position position="178"/>
    </location>
</feature>
<reference key="1">
    <citation type="submission" date="2004-02" db="EMBL/GenBank/DDBJ databases">
        <title>Rattus norvegicus mRNA for SCI induced protein.</title>
        <authorList>
            <person name="Liu S."/>
            <person name="Ma Z."/>
        </authorList>
    </citation>
    <scope>NUCLEOTIDE SEQUENCE [MRNA]</scope>
    <source>
        <strain>Wistar</strain>
    </source>
</reference>
<evidence type="ECO:0000250" key="1"/>
<evidence type="ECO:0000250" key="2">
    <source>
        <dbReference type="UniProtKB" id="Q70SY1"/>
    </source>
</evidence>
<evidence type="ECO:0000250" key="3">
    <source>
        <dbReference type="UniProtKB" id="Q8BH52"/>
    </source>
</evidence>
<evidence type="ECO:0000255" key="4"/>
<evidence type="ECO:0000255" key="5">
    <source>
        <dbReference type="PROSITE-ProRule" id="PRU00978"/>
    </source>
</evidence>
<evidence type="ECO:0000256" key="6">
    <source>
        <dbReference type="SAM" id="MobiDB-lite"/>
    </source>
</evidence>
<evidence type="ECO:0000305" key="7"/>